<dbReference type="PDB" id="1R1F">
    <property type="method" value="NMR"/>
    <property type="chains" value="A=4-37"/>
</dbReference>
<dbReference type="PDBsum" id="1R1F"/>
<dbReference type="SMR" id="P84645"/>
<dbReference type="GO" id="GO:0006952">
    <property type="term" value="P:defense response"/>
    <property type="evidence" value="ECO:0000314"/>
    <property type="project" value="UniProtKB"/>
</dbReference>
<dbReference type="InterPro" id="IPR005535">
    <property type="entry name" value="Cyclotide"/>
</dbReference>
<dbReference type="InterPro" id="IPR036146">
    <property type="entry name" value="Cyclotide_sf"/>
</dbReference>
<dbReference type="Pfam" id="PF03784">
    <property type="entry name" value="Cyclotide"/>
    <property type="match status" value="1"/>
</dbReference>
<dbReference type="SUPFAM" id="SSF57038">
    <property type="entry name" value="Cyclotides"/>
    <property type="match status" value="1"/>
</dbReference>
<accession>P84645</accession>
<feature type="peptide" id="PRO_0000044701" description="Palicourein" evidence="2">
    <location>
        <begin position="1"/>
        <end position="37"/>
    </location>
</feature>
<feature type="disulfide bond" evidence="3">
    <location>
        <begin position="6"/>
        <end position="24"/>
    </location>
</feature>
<feature type="disulfide bond" evidence="3">
    <location>
        <begin position="10"/>
        <end position="26"/>
    </location>
</feature>
<feature type="disulfide bond" evidence="3">
    <location>
        <begin position="16"/>
        <end position="34"/>
    </location>
</feature>
<feature type="cross-link" description="Cyclopeptide (Gly-Asn)" evidence="2 3">
    <location>
        <begin position="1"/>
        <end position="37"/>
    </location>
</feature>
<feature type="strand" evidence="5">
    <location>
        <begin position="11"/>
        <end position="13"/>
    </location>
</feature>
<feature type="helix" evidence="5">
    <location>
        <begin position="19"/>
        <end position="22"/>
    </location>
</feature>
<feature type="strand" evidence="5">
    <location>
        <begin position="29"/>
        <end position="31"/>
    </location>
</feature>
<proteinExistence type="evidence at protein level"/>
<protein>
    <recommendedName>
        <fullName>Palicourein</fullName>
    </recommendedName>
</protein>
<organism>
    <name type="scientific">Palicourea condensata</name>
    <name type="common">Cappel</name>
    <dbReference type="NCBI Taxonomy" id="272141"/>
    <lineage>
        <taxon>Eukaryota</taxon>
        <taxon>Viridiplantae</taxon>
        <taxon>Streptophyta</taxon>
        <taxon>Embryophyta</taxon>
        <taxon>Tracheophyta</taxon>
        <taxon>Spermatophyta</taxon>
        <taxon>Magnoliopsida</taxon>
        <taxon>eudicotyledons</taxon>
        <taxon>Gunneridae</taxon>
        <taxon>Pentapetalae</taxon>
        <taxon>asterids</taxon>
        <taxon>lamiids</taxon>
        <taxon>Gentianales</taxon>
        <taxon>Rubiaceae</taxon>
        <taxon>Rubioideae</taxon>
        <taxon>Palicoureeae</taxon>
        <taxon>Palicourea</taxon>
    </lineage>
</organism>
<keyword id="KW-0002">3D-structure</keyword>
<keyword id="KW-0903">Direct protein sequencing</keyword>
<keyword id="KW-1015">Disulfide bond</keyword>
<keyword id="KW-0960">Knottin</keyword>
<keyword id="KW-0611">Plant defense</keyword>
<reference evidence="4" key="1">
    <citation type="journal article" date="2001" name="J. Nat. Prod.">
        <title>A novel anti-HIV macrocyclic peptide from Palicourea condensata.</title>
        <authorList>
            <person name="Bokesch H.R."/>
            <person name="Pannell L.K."/>
            <person name="Cochran P.K."/>
            <person name="Sowder R.C. II"/>
            <person name="McKee T.C."/>
            <person name="Boyd M.R."/>
        </authorList>
    </citation>
    <scope>PROTEIN SEQUENCE</scope>
    <scope>FUNCTION</scope>
    <source>
        <tissue evidence="2">Bark</tissue>
    </source>
</reference>
<reference evidence="4" key="2">
    <citation type="journal article" date="2004" name="Structure">
        <title>Solution structure of the cyclotide palicourein: implications for the development of a pharmaceutical framework.</title>
        <authorList>
            <person name="Barry D.G."/>
            <person name="Daly N.L."/>
            <person name="Bokesch H.R."/>
            <person name="Gustafson K.R."/>
            <person name="Craik D.J."/>
        </authorList>
    </citation>
    <scope>STRUCTURE BY NMR</scope>
</reference>
<evidence type="ECO:0000255" key="1"/>
<evidence type="ECO:0000269" key="2">
    <source>
    </source>
</evidence>
<evidence type="ECO:0000269" key="3">
    <source>
    </source>
</evidence>
<evidence type="ECO:0000305" key="4"/>
<evidence type="ECO:0007829" key="5">
    <source>
        <dbReference type="PDB" id="1R1F"/>
    </source>
</evidence>
<sequence>GDPTFCGETCRVIPVCTYSAALGCTCDDRSDGLCKRN</sequence>
<name>PALIC_PALCO</name>
<comment type="function">
    <text evidence="2 4">Probably participates in a plant defense mechanism. Inhibits the cytopathic effects of the human immunodeficiency virus.</text>
</comment>
<comment type="domain">
    <text evidence="3">The presence of a 'disulfide through disulfide knot' structurally defines this protein as a knottin.</text>
</comment>
<comment type="PTM">
    <text evidence="2 3">This is a cyclic peptide.</text>
</comment>
<comment type="similarity">
    <text evidence="1">Belongs to the cyclotide family.</text>
</comment>
<comment type="caution">
    <text evidence="4">This peptide is cyclic. The start position was chosen by similarity to OAK1 (kalata-B1) for which the DNA sequence is known.</text>
</comment>